<feature type="chain" id="PRO_0000411129" description="Diaminopimelate decarboxylase">
    <location>
        <begin position="1"/>
        <end position="389"/>
    </location>
</feature>
<feature type="binding site" evidence="1">
    <location>
        <position position="233"/>
    </location>
    <ligand>
        <name>pyridoxal 5'-phosphate</name>
        <dbReference type="ChEBI" id="CHEBI:597326"/>
    </ligand>
</feature>
<feature type="binding site" evidence="1">
    <location>
        <begin position="271"/>
        <end position="274"/>
    </location>
    <ligand>
        <name>pyridoxal 5'-phosphate</name>
        <dbReference type="ChEBI" id="CHEBI:597326"/>
    </ligand>
</feature>
<feature type="binding site" evidence="1">
    <location>
        <position position="274"/>
    </location>
    <ligand>
        <name>substrate</name>
    </ligand>
</feature>
<feature type="binding site" evidence="1">
    <location>
        <position position="310"/>
    </location>
    <ligand>
        <name>substrate</name>
    </ligand>
</feature>
<feature type="binding site" evidence="1">
    <location>
        <position position="314"/>
    </location>
    <ligand>
        <name>substrate</name>
    </ligand>
</feature>
<feature type="binding site" evidence="1">
    <location>
        <position position="342"/>
    </location>
    <ligand>
        <name>substrate</name>
    </ligand>
</feature>
<feature type="binding site" evidence="1">
    <location>
        <position position="370"/>
    </location>
    <ligand>
        <name>pyridoxal 5'-phosphate</name>
        <dbReference type="ChEBI" id="CHEBI:597326"/>
    </ligand>
</feature>
<feature type="binding site" evidence="1">
    <location>
        <position position="370"/>
    </location>
    <ligand>
        <name>substrate</name>
    </ligand>
</feature>
<feature type="modified residue" description="N6-(pyridoxal phosphate)lysine" evidence="1">
    <location>
        <position position="58"/>
    </location>
</feature>
<gene>
    <name evidence="1" type="primary">lysA</name>
    <name type="ordered locus">FTL_0272</name>
</gene>
<reference key="1">
    <citation type="submission" date="2006-03" db="EMBL/GenBank/DDBJ databases">
        <title>Complete genome sequence of Francisella tularensis LVS (Live Vaccine Strain).</title>
        <authorList>
            <person name="Chain P."/>
            <person name="Larimer F."/>
            <person name="Land M."/>
            <person name="Stilwagen S."/>
            <person name="Larsson P."/>
            <person name="Bearden S."/>
            <person name="Chu M."/>
            <person name="Oyston P."/>
            <person name="Forsman M."/>
            <person name="Andersson S."/>
            <person name="Lindler L."/>
            <person name="Titball R."/>
            <person name="Garcia E."/>
        </authorList>
    </citation>
    <scope>NUCLEOTIDE SEQUENCE [LARGE SCALE GENOMIC DNA]</scope>
    <source>
        <strain>LVS</strain>
    </source>
</reference>
<comment type="function">
    <text evidence="1">Specifically catalyzes the decarboxylation of meso-diaminopimelate (meso-DAP) to L-lysine.</text>
</comment>
<comment type="catalytic activity">
    <reaction evidence="1">
        <text>meso-2,6-diaminopimelate + H(+) = L-lysine + CO2</text>
        <dbReference type="Rhea" id="RHEA:15101"/>
        <dbReference type="ChEBI" id="CHEBI:15378"/>
        <dbReference type="ChEBI" id="CHEBI:16526"/>
        <dbReference type="ChEBI" id="CHEBI:32551"/>
        <dbReference type="ChEBI" id="CHEBI:57791"/>
        <dbReference type="EC" id="4.1.1.20"/>
    </reaction>
</comment>
<comment type="cofactor">
    <cofactor evidence="1">
        <name>pyridoxal 5'-phosphate</name>
        <dbReference type="ChEBI" id="CHEBI:597326"/>
    </cofactor>
</comment>
<comment type="pathway">
    <text evidence="1">Amino-acid biosynthesis; L-lysine biosynthesis via DAP pathway; L-lysine from DL-2,6-diaminopimelate: step 1/1.</text>
</comment>
<comment type="subunit">
    <text evidence="1">Homodimer.</text>
</comment>
<comment type="similarity">
    <text evidence="1">Belongs to the Orn/Lys/Arg decarboxylase class-II family. LysA subfamily.</text>
</comment>
<proteinExistence type="inferred from homology"/>
<name>DCDA_FRATH</name>
<protein>
    <recommendedName>
        <fullName evidence="1">Diaminopimelate decarboxylase</fullName>
        <shortName evidence="1">DAP decarboxylase</shortName>
        <shortName evidence="1">DAPDC</shortName>
        <ecNumber evidence="1">4.1.1.20</ecNumber>
    </recommendedName>
</protein>
<keyword id="KW-0028">Amino-acid biosynthesis</keyword>
<keyword id="KW-0210">Decarboxylase</keyword>
<keyword id="KW-0456">Lyase</keyword>
<keyword id="KW-0457">Lysine biosynthesis</keyword>
<keyword id="KW-0663">Pyridoxal phosphate</keyword>
<keyword id="KW-1185">Reference proteome</keyword>
<sequence length="389" mass="44538">MNKYIIFDNTKLLEYIGKNSLITPCYIYDLELLEDTFLNAKKSLDKNFKNAEIHYAIKANHNPKIVGIAKKYGMGIDCVSGGEIKRALEQKVDSQHIVFARFEIELAIDNDIFAFNSESLEEIQVINQIAQRKNKQVNICLRVNPNIDAQTHHYISTGQFDDKFGIAFVDILNWLKDEYRNFANINIIGLHYHVGSQILNYQVFQSLAITTNEHIKLLRQNDINIKHINFGGGLGIDYQNPQQNPIVDFDGYFARFREFFKYSDELVLHFELGRSLVGQSGVLVSQVLFNKVTQGTHFVIIDAGMTELIRPALYQAQHKIAALIDENINQKQHYHIVGPICESSDVFAKYYQLPKLKRGDLLAIYSAGAYGKVLASEYNLRPSVQEYFI</sequence>
<evidence type="ECO:0000255" key="1">
    <source>
        <dbReference type="HAMAP-Rule" id="MF_02120"/>
    </source>
</evidence>
<dbReference type="EC" id="4.1.1.20" evidence="1"/>
<dbReference type="EMBL" id="AM233362">
    <property type="protein sequence ID" value="CAJ78713.1"/>
    <property type="molecule type" value="Genomic_DNA"/>
</dbReference>
<dbReference type="RefSeq" id="WP_003014397.1">
    <property type="nucleotide sequence ID" value="NZ_CP009694.1"/>
</dbReference>
<dbReference type="SMR" id="Q2A5D5"/>
<dbReference type="KEGG" id="ftl:FTL_0272"/>
<dbReference type="UniPathway" id="UPA00034">
    <property type="reaction ID" value="UER00027"/>
</dbReference>
<dbReference type="Proteomes" id="UP000001944">
    <property type="component" value="Chromosome"/>
</dbReference>
<dbReference type="GO" id="GO:0008836">
    <property type="term" value="F:diaminopimelate decarboxylase activity"/>
    <property type="evidence" value="ECO:0007669"/>
    <property type="project" value="UniProtKB-UniRule"/>
</dbReference>
<dbReference type="GO" id="GO:0030170">
    <property type="term" value="F:pyridoxal phosphate binding"/>
    <property type="evidence" value="ECO:0007669"/>
    <property type="project" value="UniProtKB-UniRule"/>
</dbReference>
<dbReference type="GO" id="GO:0009089">
    <property type="term" value="P:lysine biosynthetic process via diaminopimelate"/>
    <property type="evidence" value="ECO:0007669"/>
    <property type="project" value="UniProtKB-UniRule"/>
</dbReference>
<dbReference type="CDD" id="cd06828">
    <property type="entry name" value="PLPDE_III_DapDC"/>
    <property type="match status" value="1"/>
</dbReference>
<dbReference type="FunFam" id="3.20.20.10:FF:000003">
    <property type="entry name" value="Diaminopimelate decarboxylase"/>
    <property type="match status" value="1"/>
</dbReference>
<dbReference type="Gene3D" id="3.20.20.10">
    <property type="entry name" value="Alanine racemase"/>
    <property type="match status" value="1"/>
</dbReference>
<dbReference type="Gene3D" id="2.40.37.10">
    <property type="entry name" value="Lyase, Ornithine Decarboxylase, Chain A, domain 1"/>
    <property type="match status" value="1"/>
</dbReference>
<dbReference type="HAMAP" id="MF_02120">
    <property type="entry name" value="LysA"/>
    <property type="match status" value="1"/>
</dbReference>
<dbReference type="InterPro" id="IPR009006">
    <property type="entry name" value="Ala_racemase/Decarboxylase_C"/>
</dbReference>
<dbReference type="InterPro" id="IPR002986">
    <property type="entry name" value="DAP_deCOOHase_LysA"/>
</dbReference>
<dbReference type="InterPro" id="IPR022643">
    <property type="entry name" value="De-COase2_C"/>
</dbReference>
<dbReference type="InterPro" id="IPR022644">
    <property type="entry name" value="De-COase2_N"/>
</dbReference>
<dbReference type="InterPro" id="IPR022653">
    <property type="entry name" value="De-COase2_pyr-phos_BS"/>
</dbReference>
<dbReference type="InterPro" id="IPR000183">
    <property type="entry name" value="Orn/DAP/Arg_de-COase"/>
</dbReference>
<dbReference type="InterPro" id="IPR029066">
    <property type="entry name" value="PLP-binding_barrel"/>
</dbReference>
<dbReference type="NCBIfam" id="TIGR01048">
    <property type="entry name" value="lysA"/>
    <property type="match status" value="1"/>
</dbReference>
<dbReference type="PANTHER" id="PTHR43727">
    <property type="entry name" value="DIAMINOPIMELATE DECARBOXYLASE"/>
    <property type="match status" value="1"/>
</dbReference>
<dbReference type="PANTHER" id="PTHR43727:SF2">
    <property type="entry name" value="GROUP IV DECARBOXYLASE"/>
    <property type="match status" value="1"/>
</dbReference>
<dbReference type="Pfam" id="PF02784">
    <property type="entry name" value="Orn_Arg_deC_N"/>
    <property type="match status" value="1"/>
</dbReference>
<dbReference type="Pfam" id="PF00278">
    <property type="entry name" value="Orn_DAP_Arg_deC"/>
    <property type="match status" value="1"/>
</dbReference>
<dbReference type="PRINTS" id="PR01181">
    <property type="entry name" value="DAPDCRBXLASE"/>
</dbReference>
<dbReference type="PRINTS" id="PR01179">
    <property type="entry name" value="ODADCRBXLASE"/>
</dbReference>
<dbReference type="SUPFAM" id="SSF50621">
    <property type="entry name" value="Alanine racemase C-terminal domain-like"/>
    <property type="match status" value="1"/>
</dbReference>
<dbReference type="SUPFAM" id="SSF51419">
    <property type="entry name" value="PLP-binding barrel"/>
    <property type="match status" value="1"/>
</dbReference>
<dbReference type="PROSITE" id="PS00878">
    <property type="entry name" value="ODR_DC_2_1"/>
    <property type="match status" value="1"/>
</dbReference>
<accession>Q2A5D5</accession>
<organism>
    <name type="scientific">Francisella tularensis subsp. holarctica (strain LVS)</name>
    <dbReference type="NCBI Taxonomy" id="376619"/>
    <lineage>
        <taxon>Bacteria</taxon>
        <taxon>Pseudomonadati</taxon>
        <taxon>Pseudomonadota</taxon>
        <taxon>Gammaproteobacteria</taxon>
        <taxon>Thiotrichales</taxon>
        <taxon>Francisellaceae</taxon>
        <taxon>Francisella</taxon>
    </lineage>
</organism>